<reference key="1">
    <citation type="journal article" date="2000" name="Nature">
        <title>The genome sequence of the plant pathogen Xylella fastidiosa.</title>
        <authorList>
            <person name="Simpson A.J.G."/>
            <person name="Reinach F.C."/>
            <person name="Arruda P."/>
            <person name="Abreu F.A."/>
            <person name="Acencio M."/>
            <person name="Alvarenga R."/>
            <person name="Alves L.M.C."/>
            <person name="Araya J.E."/>
            <person name="Baia G.S."/>
            <person name="Baptista C.S."/>
            <person name="Barros M.H."/>
            <person name="Bonaccorsi E.D."/>
            <person name="Bordin S."/>
            <person name="Bove J.M."/>
            <person name="Briones M.R.S."/>
            <person name="Bueno M.R.P."/>
            <person name="Camargo A.A."/>
            <person name="Camargo L.E.A."/>
            <person name="Carraro D.M."/>
            <person name="Carrer H."/>
            <person name="Colauto N.B."/>
            <person name="Colombo C."/>
            <person name="Costa F.F."/>
            <person name="Costa M.C.R."/>
            <person name="Costa-Neto C.M."/>
            <person name="Coutinho L.L."/>
            <person name="Cristofani M."/>
            <person name="Dias-Neto E."/>
            <person name="Docena C."/>
            <person name="El-Dorry H."/>
            <person name="Facincani A.P."/>
            <person name="Ferreira A.J.S."/>
            <person name="Ferreira V.C.A."/>
            <person name="Ferro J.A."/>
            <person name="Fraga J.S."/>
            <person name="Franca S.C."/>
            <person name="Franco M.C."/>
            <person name="Frohme M."/>
            <person name="Furlan L.R."/>
            <person name="Garnier M."/>
            <person name="Goldman G.H."/>
            <person name="Goldman M.H.S."/>
            <person name="Gomes S.L."/>
            <person name="Gruber A."/>
            <person name="Ho P.L."/>
            <person name="Hoheisel J.D."/>
            <person name="Junqueira M.L."/>
            <person name="Kemper E.L."/>
            <person name="Kitajima J.P."/>
            <person name="Krieger J.E."/>
            <person name="Kuramae E.E."/>
            <person name="Laigret F."/>
            <person name="Lambais M.R."/>
            <person name="Leite L.C.C."/>
            <person name="Lemos E.G.M."/>
            <person name="Lemos M.V.F."/>
            <person name="Lopes S.A."/>
            <person name="Lopes C.R."/>
            <person name="Machado J.A."/>
            <person name="Machado M.A."/>
            <person name="Madeira A.M.B.N."/>
            <person name="Madeira H.M.F."/>
            <person name="Marino C.L."/>
            <person name="Marques M.V."/>
            <person name="Martins E.A.L."/>
            <person name="Martins E.M.F."/>
            <person name="Matsukuma A.Y."/>
            <person name="Menck C.F.M."/>
            <person name="Miracca E.C."/>
            <person name="Miyaki C.Y."/>
            <person name="Monteiro-Vitorello C.B."/>
            <person name="Moon D.H."/>
            <person name="Nagai M.A."/>
            <person name="Nascimento A.L.T.O."/>
            <person name="Netto L.E.S."/>
            <person name="Nhani A. Jr."/>
            <person name="Nobrega F.G."/>
            <person name="Nunes L.R."/>
            <person name="Oliveira M.A."/>
            <person name="de Oliveira M.C."/>
            <person name="de Oliveira R.C."/>
            <person name="Palmieri D.A."/>
            <person name="Paris A."/>
            <person name="Peixoto B.R."/>
            <person name="Pereira G.A.G."/>
            <person name="Pereira H.A. Jr."/>
            <person name="Pesquero J.B."/>
            <person name="Quaggio R.B."/>
            <person name="Roberto P.G."/>
            <person name="Rodrigues V."/>
            <person name="de Rosa A.J.M."/>
            <person name="de Rosa V.E. Jr."/>
            <person name="de Sa R.G."/>
            <person name="Santelli R.V."/>
            <person name="Sawasaki H.E."/>
            <person name="da Silva A.C.R."/>
            <person name="da Silva A.M."/>
            <person name="da Silva F.R."/>
            <person name="Silva W.A. Jr."/>
            <person name="da Silveira J.F."/>
            <person name="Silvestri M.L.Z."/>
            <person name="Siqueira W.J."/>
            <person name="de Souza A.A."/>
            <person name="de Souza A.P."/>
            <person name="Terenzi M.F."/>
            <person name="Truffi D."/>
            <person name="Tsai S.M."/>
            <person name="Tsuhako M.H."/>
            <person name="Vallada H."/>
            <person name="Van Sluys M.A."/>
            <person name="Verjovski-Almeida S."/>
            <person name="Vettore A.L."/>
            <person name="Zago M.A."/>
            <person name="Zatz M."/>
            <person name="Meidanis J."/>
            <person name="Setubal J.C."/>
        </authorList>
    </citation>
    <scope>NUCLEOTIDE SEQUENCE [LARGE SCALE GENOMIC DNA]</scope>
    <source>
        <strain>9a5c</strain>
    </source>
</reference>
<evidence type="ECO:0000255" key="1">
    <source>
        <dbReference type="HAMAP-Rule" id="MF_00500"/>
    </source>
</evidence>
<evidence type="ECO:0000256" key="2">
    <source>
        <dbReference type="SAM" id="MobiDB-lite"/>
    </source>
</evidence>
<evidence type="ECO:0000305" key="3"/>
<proteinExistence type="inferred from homology"/>
<gene>
    <name evidence="1" type="primary">rpsT</name>
    <name type="ordered locus">XF_2421</name>
</gene>
<name>RS20_XYLFA</name>
<keyword id="KW-0687">Ribonucleoprotein</keyword>
<keyword id="KW-0689">Ribosomal protein</keyword>
<keyword id="KW-0694">RNA-binding</keyword>
<keyword id="KW-0699">rRNA-binding</keyword>
<organism>
    <name type="scientific">Xylella fastidiosa (strain 9a5c)</name>
    <dbReference type="NCBI Taxonomy" id="160492"/>
    <lineage>
        <taxon>Bacteria</taxon>
        <taxon>Pseudomonadati</taxon>
        <taxon>Pseudomonadota</taxon>
        <taxon>Gammaproteobacteria</taxon>
        <taxon>Lysobacterales</taxon>
        <taxon>Lysobacteraceae</taxon>
        <taxon>Xylella</taxon>
    </lineage>
</organism>
<accession>P66512</accession>
<accession>Q9PAS4</accession>
<comment type="function">
    <text evidence="1">Binds directly to 16S ribosomal RNA.</text>
</comment>
<comment type="similarity">
    <text evidence="1">Belongs to the bacterial ribosomal protein bS20 family.</text>
</comment>
<comment type="sequence caution" evidence="3">
    <conflict type="erroneous initiation">
        <sequence resource="EMBL-CDS" id="AAF85220"/>
    </conflict>
</comment>
<sequence length="89" mass="9879">MANIKSAKKRVKQTVVRNERNTAQRSMLRTAVKKVIKALSIKDIAGAETAFAVAQPILDRFSSRGLIHKNKAARHKSRLTARIKALKTA</sequence>
<feature type="chain" id="PRO_0000168066" description="Small ribosomal subunit protein bS20">
    <location>
        <begin position="1"/>
        <end position="89"/>
    </location>
</feature>
<feature type="region of interest" description="Disordered" evidence="2">
    <location>
        <begin position="1"/>
        <end position="20"/>
    </location>
</feature>
<feature type="compositionally biased region" description="Basic residues" evidence="2">
    <location>
        <begin position="1"/>
        <end position="12"/>
    </location>
</feature>
<dbReference type="EMBL" id="AE003849">
    <property type="protein sequence ID" value="AAF85220.1"/>
    <property type="status" value="ALT_INIT"/>
    <property type="molecule type" value="Genomic_DNA"/>
</dbReference>
<dbReference type="PIR" id="F82559">
    <property type="entry name" value="F82559"/>
</dbReference>
<dbReference type="RefSeq" id="WP_010894866.1">
    <property type="nucleotide sequence ID" value="NC_002488.3"/>
</dbReference>
<dbReference type="SMR" id="P66512"/>
<dbReference type="STRING" id="160492.XF_2421"/>
<dbReference type="GeneID" id="93905261"/>
<dbReference type="KEGG" id="xfa:XF_2421"/>
<dbReference type="eggNOG" id="COG0268">
    <property type="taxonomic scope" value="Bacteria"/>
</dbReference>
<dbReference type="HOGENOM" id="CLU_160655_4_0_6"/>
<dbReference type="Proteomes" id="UP000000812">
    <property type="component" value="Chromosome"/>
</dbReference>
<dbReference type="GO" id="GO:0005829">
    <property type="term" value="C:cytosol"/>
    <property type="evidence" value="ECO:0007669"/>
    <property type="project" value="TreeGrafter"/>
</dbReference>
<dbReference type="GO" id="GO:0015935">
    <property type="term" value="C:small ribosomal subunit"/>
    <property type="evidence" value="ECO:0007669"/>
    <property type="project" value="TreeGrafter"/>
</dbReference>
<dbReference type="GO" id="GO:0070181">
    <property type="term" value="F:small ribosomal subunit rRNA binding"/>
    <property type="evidence" value="ECO:0007669"/>
    <property type="project" value="TreeGrafter"/>
</dbReference>
<dbReference type="GO" id="GO:0003735">
    <property type="term" value="F:structural constituent of ribosome"/>
    <property type="evidence" value="ECO:0007669"/>
    <property type="project" value="InterPro"/>
</dbReference>
<dbReference type="GO" id="GO:0006412">
    <property type="term" value="P:translation"/>
    <property type="evidence" value="ECO:0007669"/>
    <property type="project" value="UniProtKB-UniRule"/>
</dbReference>
<dbReference type="FunFam" id="1.20.58.110:FF:000001">
    <property type="entry name" value="30S ribosomal protein S20"/>
    <property type="match status" value="1"/>
</dbReference>
<dbReference type="Gene3D" id="1.20.58.110">
    <property type="entry name" value="Ribosomal protein S20"/>
    <property type="match status" value="1"/>
</dbReference>
<dbReference type="HAMAP" id="MF_00500">
    <property type="entry name" value="Ribosomal_bS20"/>
    <property type="match status" value="1"/>
</dbReference>
<dbReference type="InterPro" id="IPR002583">
    <property type="entry name" value="Ribosomal_bS20"/>
</dbReference>
<dbReference type="InterPro" id="IPR036510">
    <property type="entry name" value="Ribosomal_bS20_sf"/>
</dbReference>
<dbReference type="NCBIfam" id="TIGR00029">
    <property type="entry name" value="S20"/>
    <property type="match status" value="1"/>
</dbReference>
<dbReference type="PANTHER" id="PTHR33398">
    <property type="entry name" value="30S RIBOSOMAL PROTEIN S20"/>
    <property type="match status" value="1"/>
</dbReference>
<dbReference type="PANTHER" id="PTHR33398:SF1">
    <property type="entry name" value="SMALL RIBOSOMAL SUBUNIT PROTEIN BS20C"/>
    <property type="match status" value="1"/>
</dbReference>
<dbReference type="Pfam" id="PF01649">
    <property type="entry name" value="Ribosomal_S20p"/>
    <property type="match status" value="1"/>
</dbReference>
<dbReference type="SUPFAM" id="SSF46992">
    <property type="entry name" value="Ribosomal protein S20"/>
    <property type="match status" value="1"/>
</dbReference>
<protein>
    <recommendedName>
        <fullName evidence="1">Small ribosomal subunit protein bS20</fullName>
    </recommendedName>
    <alternativeName>
        <fullName evidence="3">30S ribosomal protein S20</fullName>
    </alternativeName>
</protein>